<reference key="1">
    <citation type="submission" date="2007-02" db="EMBL/GenBank/DDBJ databases">
        <title>Complete sequence of chromosome of Yersinia pestis Pestoides F.</title>
        <authorList>
            <consortium name="US DOE Joint Genome Institute"/>
            <person name="Copeland A."/>
            <person name="Lucas S."/>
            <person name="Lapidus A."/>
            <person name="Barry K."/>
            <person name="Detter J.C."/>
            <person name="Glavina del Rio T."/>
            <person name="Hammon N."/>
            <person name="Israni S."/>
            <person name="Dalin E."/>
            <person name="Tice H."/>
            <person name="Pitluck S."/>
            <person name="Di Bartolo G."/>
            <person name="Chain P."/>
            <person name="Malfatti S."/>
            <person name="Shin M."/>
            <person name="Vergez L."/>
            <person name="Schmutz J."/>
            <person name="Larimer F."/>
            <person name="Land M."/>
            <person name="Hauser L."/>
            <person name="Worsham P."/>
            <person name="Chu M."/>
            <person name="Bearden S."/>
            <person name="Garcia E."/>
            <person name="Richardson P."/>
        </authorList>
    </citation>
    <scope>NUCLEOTIDE SEQUENCE [LARGE SCALE GENOMIC DNA]</scope>
    <source>
        <strain>Pestoides F</strain>
    </source>
</reference>
<keyword id="KW-0028">Amino-acid biosynthesis</keyword>
<keyword id="KW-0061">Asparagine biosynthesis</keyword>
<keyword id="KW-0067">ATP-binding</keyword>
<keyword id="KW-0963">Cytoplasm</keyword>
<keyword id="KW-0436">Ligase</keyword>
<keyword id="KW-0547">Nucleotide-binding</keyword>
<accession>A4TSI1</accession>
<gene>
    <name evidence="1" type="primary">asnA</name>
    <name type="ordered locus">YPDSF_3902</name>
</gene>
<dbReference type="EC" id="6.3.1.1" evidence="1"/>
<dbReference type="EMBL" id="CP000668">
    <property type="protein sequence ID" value="ABP42243.1"/>
    <property type="molecule type" value="Genomic_DNA"/>
</dbReference>
<dbReference type="RefSeq" id="WP_002212256.1">
    <property type="nucleotide sequence ID" value="NZ_CP009715.1"/>
</dbReference>
<dbReference type="SMR" id="A4TSI1"/>
<dbReference type="GeneID" id="57974591"/>
<dbReference type="KEGG" id="ypp:YPDSF_3902"/>
<dbReference type="PATRIC" id="fig|386656.14.peg.615"/>
<dbReference type="UniPathway" id="UPA00134">
    <property type="reaction ID" value="UER00194"/>
</dbReference>
<dbReference type="GO" id="GO:0005829">
    <property type="term" value="C:cytosol"/>
    <property type="evidence" value="ECO:0007669"/>
    <property type="project" value="TreeGrafter"/>
</dbReference>
<dbReference type="GO" id="GO:0004071">
    <property type="term" value="F:aspartate-ammonia ligase activity"/>
    <property type="evidence" value="ECO:0007669"/>
    <property type="project" value="UniProtKB-UniRule"/>
</dbReference>
<dbReference type="GO" id="GO:0005524">
    <property type="term" value="F:ATP binding"/>
    <property type="evidence" value="ECO:0007669"/>
    <property type="project" value="UniProtKB-UniRule"/>
</dbReference>
<dbReference type="GO" id="GO:0070981">
    <property type="term" value="P:L-asparagine biosynthetic process"/>
    <property type="evidence" value="ECO:0007669"/>
    <property type="project" value="UniProtKB-UniRule"/>
</dbReference>
<dbReference type="Gene3D" id="3.30.930.10">
    <property type="entry name" value="Bira Bifunctional Protein, Domain 2"/>
    <property type="match status" value="1"/>
</dbReference>
<dbReference type="HAMAP" id="MF_00555">
    <property type="entry name" value="AsnA"/>
    <property type="match status" value="1"/>
</dbReference>
<dbReference type="InterPro" id="IPR006195">
    <property type="entry name" value="aa-tRNA-synth_II"/>
</dbReference>
<dbReference type="InterPro" id="IPR045864">
    <property type="entry name" value="aa-tRNA-synth_II/BPL/LPL"/>
</dbReference>
<dbReference type="InterPro" id="IPR004618">
    <property type="entry name" value="AsnA"/>
</dbReference>
<dbReference type="NCBIfam" id="TIGR00669">
    <property type="entry name" value="asnA"/>
    <property type="match status" value="1"/>
</dbReference>
<dbReference type="PANTHER" id="PTHR30073">
    <property type="entry name" value="ASPARTATE--AMMONIA LIGASE"/>
    <property type="match status" value="1"/>
</dbReference>
<dbReference type="PANTHER" id="PTHR30073:SF5">
    <property type="entry name" value="ASPARTATE--AMMONIA LIGASE"/>
    <property type="match status" value="1"/>
</dbReference>
<dbReference type="Pfam" id="PF03590">
    <property type="entry name" value="AsnA"/>
    <property type="match status" value="1"/>
</dbReference>
<dbReference type="PIRSF" id="PIRSF001555">
    <property type="entry name" value="Asp_ammon_ligase"/>
    <property type="match status" value="1"/>
</dbReference>
<dbReference type="SUPFAM" id="SSF55681">
    <property type="entry name" value="Class II aaRS and biotin synthetases"/>
    <property type="match status" value="1"/>
</dbReference>
<dbReference type="PROSITE" id="PS50862">
    <property type="entry name" value="AA_TRNA_LIGASE_II"/>
    <property type="match status" value="1"/>
</dbReference>
<feature type="chain" id="PRO_1000017977" description="Aspartate--ammonia ligase">
    <location>
        <begin position="1"/>
        <end position="330"/>
    </location>
</feature>
<protein>
    <recommendedName>
        <fullName evidence="1">Aspartate--ammonia ligase</fullName>
        <ecNumber evidence="1">6.3.1.1</ecNumber>
    </recommendedName>
    <alternativeName>
        <fullName evidence="1">Asparagine synthetase A</fullName>
    </alternativeName>
</protein>
<proteinExistence type="inferred from homology"/>
<name>ASNA_YERPP</name>
<sequence>MKKQFIQKQQQISFVKSFFSRQLEQQLGLIEVQAPILSRVGDGTQDNLSGSEKAVQVKVKSLPDSTFEVVHSLAKWKRKTLGRFDFGADQGVYTHMKALRPDEDRLSAIHSVYVDQWDWERVMGDGERNLAYLKSTVNKIYAAIKETEAAISAEFGVKPFLPDHIQFIHSESLRARFPDLDAKGRERAIAKELGAVFLIGIGGKLADGQSHDVRAPDYDDWTSPSAEGFSGLNGDIIVWNPILEDAFEISSMGIRVDAEALKRQLALTGDEDRLELEWHQSLLRGEMPQTIGGGIGQSRLVMLLLQKQHIGQVQCGVWGPEISEKVDGLL</sequence>
<organism>
    <name type="scientific">Yersinia pestis (strain Pestoides F)</name>
    <dbReference type="NCBI Taxonomy" id="386656"/>
    <lineage>
        <taxon>Bacteria</taxon>
        <taxon>Pseudomonadati</taxon>
        <taxon>Pseudomonadota</taxon>
        <taxon>Gammaproteobacteria</taxon>
        <taxon>Enterobacterales</taxon>
        <taxon>Yersiniaceae</taxon>
        <taxon>Yersinia</taxon>
    </lineage>
</organism>
<comment type="catalytic activity">
    <reaction evidence="1">
        <text>L-aspartate + NH4(+) + ATP = L-asparagine + AMP + diphosphate + H(+)</text>
        <dbReference type="Rhea" id="RHEA:11372"/>
        <dbReference type="ChEBI" id="CHEBI:15378"/>
        <dbReference type="ChEBI" id="CHEBI:28938"/>
        <dbReference type="ChEBI" id="CHEBI:29991"/>
        <dbReference type="ChEBI" id="CHEBI:30616"/>
        <dbReference type="ChEBI" id="CHEBI:33019"/>
        <dbReference type="ChEBI" id="CHEBI:58048"/>
        <dbReference type="ChEBI" id="CHEBI:456215"/>
        <dbReference type="EC" id="6.3.1.1"/>
    </reaction>
</comment>
<comment type="pathway">
    <text evidence="1">Amino-acid biosynthesis; L-asparagine biosynthesis; L-asparagine from L-aspartate (ammonia route): step 1/1.</text>
</comment>
<comment type="subcellular location">
    <subcellularLocation>
        <location evidence="1">Cytoplasm</location>
    </subcellularLocation>
</comment>
<comment type="similarity">
    <text evidence="1">Belongs to the class-II aminoacyl-tRNA synthetase family. AsnA subfamily.</text>
</comment>
<evidence type="ECO:0000255" key="1">
    <source>
        <dbReference type="HAMAP-Rule" id="MF_00555"/>
    </source>
</evidence>